<reference key="1">
    <citation type="journal article" date="2011" name="J. Bacteriol.">
        <title>Comparative genomics of 28 Salmonella enterica isolates: evidence for CRISPR-mediated adaptive sublineage evolution.</title>
        <authorList>
            <person name="Fricke W.F."/>
            <person name="Mammel M.K."/>
            <person name="McDermott P.F."/>
            <person name="Tartera C."/>
            <person name="White D.G."/>
            <person name="Leclerc J.E."/>
            <person name="Ravel J."/>
            <person name="Cebula T.A."/>
        </authorList>
    </citation>
    <scope>NUCLEOTIDE SEQUENCE [LARGE SCALE GENOMIC DNA]</scope>
    <source>
        <strain>CT_02021853</strain>
    </source>
</reference>
<evidence type="ECO:0000255" key="1">
    <source>
        <dbReference type="HAMAP-Rule" id="MF_01082"/>
    </source>
</evidence>
<proteinExistence type="inferred from homology"/>
<keyword id="KW-0413">Isomerase</keyword>
<keyword id="KW-0819">tRNA processing</keyword>
<feature type="chain" id="PRO_1000136848" description="tRNA pseudouridine synthase D">
    <location>
        <begin position="1"/>
        <end position="349"/>
    </location>
</feature>
<feature type="domain" description="TRUD" evidence="1">
    <location>
        <begin position="155"/>
        <end position="303"/>
    </location>
</feature>
<feature type="active site" description="Nucleophile" evidence="1">
    <location>
        <position position="80"/>
    </location>
</feature>
<feature type="binding site" evidence="1">
    <location>
        <position position="27"/>
    </location>
    <ligand>
        <name>substrate</name>
    </ligand>
</feature>
<feature type="binding site" evidence="1">
    <location>
        <position position="129"/>
    </location>
    <ligand>
        <name>substrate</name>
    </ligand>
</feature>
<feature type="binding site" evidence="1">
    <location>
        <position position="329"/>
    </location>
    <ligand>
        <name>substrate</name>
    </ligand>
</feature>
<name>TRUD_SALDC</name>
<accession>B5FTS3</accession>
<sequence>MTEFDNLTWLHGKPQGSGLLKANPEDFVVVEDLGFTPDGEGEHILLRILKNGCNTRFVADALAKFLKIHAREVSFAGQKDKHAVTEQWLCARVPGKEMPDFSAFQLEGCKVLEYARHKRKLRLGALKGNAFTLVLREISDRRDVETRLQAIRDGGVPNYFGAQRFGIGGSNLQGALRWAQSNAPVRDRNKRSFWLSAARSALFNQIVHQRLKKPDFNQVVDGDALQLAGRGSWFVATSEELPELQRRVDEKELMITASLPGSGEWGTQRAALAFEQDAIAQETVLQSLLLREKVEASRRAMLLYPQQLSWNWWDDVTVELRFWLPAGSFATSVVRELINTMGDYAHIAE</sequence>
<gene>
    <name evidence="1" type="primary">truD</name>
    <name type="ordered locus">SeD_A3238</name>
</gene>
<protein>
    <recommendedName>
        <fullName evidence="1">tRNA pseudouridine synthase D</fullName>
        <ecNumber evidence="1">5.4.99.27</ecNumber>
    </recommendedName>
    <alternativeName>
        <fullName evidence="1">tRNA pseudouridine(13) synthase</fullName>
    </alternativeName>
    <alternativeName>
        <fullName evidence="1">tRNA pseudouridylate synthase D</fullName>
    </alternativeName>
    <alternativeName>
        <fullName evidence="1">tRNA-uridine isomerase D</fullName>
    </alternativeName>
</protein>
<comment type="function">
    <text evidence="1">Responsible for synthesis of pseudouridine from uracil-13 in transfer RNAs.</text>
</comment>
<comment type="catalytic activity">
    <reaction evidence="1">
        <text>uridine(13) in tRNA = pseudouridine(13) in tRNA</text>
        <dbReference type="Rhea" id="RHEA:42540"/>
        <dbReference type="Rhea" id="RHEA-COMP:10105"/>
        <dbReference type="Rhea" id="RHEA-COMP:10106"/>
        <dbReference type="ChEBI" id="CHEBI:65314"/>
        <dbReference type="ChEBI" id="CHEBI:65315"/>
        <dbReference type="EC" id="5.4.99.27"/>
    </reaction>
</comment>
<comment type="similarity">
    <text evidence="1">Belongs to the pseudouridine synthase TruD family.</text>
</comment>
<organism>
    <name type="scientific">Salmonella dublin (strain CT_02021853)</name>
    <dbReference type="NCBI Taxonomy" id="439851"/>
    <lineage>
        <taxon>Bacteria</taxon>
        <taxon>Pseudomonadati</taxon>
        <taxon>Pseudomonadota</taxon>
        <taxon>Gammaproteobacteria</taxon>
        <taxon>Enterobacterales</taxon>
        <taxon>Enterobacteriaceae</taxon>
        <taxon>Salmonella</taxon>
    </lineage>
</organism>
<dbReference type="EC" id="5.4.99.27" evidence="1"/>
<dbReference type="EMBL" id="CP001144">
    <property type="protein sequence ID" value="ACH77589.1"/>
    <property type="molecule type" value="Genomic_DNA"/>
</dbReference>
<dbReference type="RefSeq" id="WP_000134246.1">
    <property type="nucleotide sequence ID" value="NC_011205.1"/>
</dbReference>
<dbReference type="SMR" id="B5FTS3"/>
<dbReference type="KEGG" id="sed:SeD_A3238"/>
<dbReference type="HOGENOM" id="CLU_005281_4_0_6"/>
<dbReference type="Proteomes" id="UP000008322">
    <property type="component" value="Chromosome"/>
</dbReference>
<dbReference type="GO" id="GO:0005829">
    <property type="term" value="C:cytosol"/>
    <property type="evidence" value="ECO:0007669"/>
    <property type="project" value="TreeGrafter"/>
</dbReference>
<dbReference type="GO" id="GO:0003723">
    <property type="term" value="F:RNA binding"/>
    <property type="evidence" value="ECO:0007669"/>
    <property type="project" value="InterPro"/>
</dbReference>
<dbReference type="GO" id="GO:0160150">
    <property type="term" value="F:tRNA pseudouridine(13) synthase activity"/>
    <property type="evidence" value="ECO:0007669"/>
    <property type="project" value="UniProtKB-EC"/>
</dbReference>
<dbReference type="GO" id="GO:0031119">
    <property type="term" value="P:tRNA pseudouridine synthesis"/>
    <property type="evidence" value="ECO:0007669"/>
    <property type="project" value="UniProtKB-UniRule"/>
</dbReference>
<dbReference type="CDD" id="cd02575">
    <property type="entry name" value="PseudoU_synth_EcTruD"/>
    <property type="match status" value="1"/>
</dbReference>
<dbReference type="FunFam" id="3.30.2340.10:FF:000001">
    <property type="entry name" value="tRNA pseudouridine synthase D"/>
    <property type="match status" value="1"/>
</dbReference>
<dbReference type="FunFam" id="3.30.2350.20:FF:000001">
    <property type="entry name" value="tRNA pseudouridine synthase D"/>
    <property type="match status" value="1"/>
</dbReference>
<dbReference type="Gene3D" id="3.30.2350.20">
    <property type="entry name" value="TruD, catalytic domain"/>
    <property type="match status" value="1"/>
</dbReference>
<dbReference type="Gene3D" id="3.30.2340.10">
    <property type="entry name" value="TruD, insertion domain"/>
    <property type="match status" value="1"/>
</dbReference>
<dbReference type="HAMAP" id="MF_01082">
    <property type="entry name" value="TruD"/>
    <property type="match status" value="1"/>
</dbReference>
<dbReference type="InterPro" id="IPR020103">
    <property type="entry name" value="PsdUridine_synth_cat_dom_sf"/>
</dbReference>
<dbReference type="InterPro" id="IPR001656">
    <property type="entry name" value="PsdUridine_synth_TruD"/>
</dbReference>
<dbReference type="InterPro" id="IPR020119">
    <property type="entry name" value="PsdUridine_synth_TruD_CS"/>
</dbReference>
<dbReference type="InterPro" id="IPR011760">
    <property type="entry name" value="PsdUridine_synth_TruD_insert"/>
</dbReference>
<dbReference type="InterPro" id="IPR042214">
    <property type="entry name" value="TruD_catalytic"/>
</dbReference>
<dbReference type="InterPro" id="IPR043165">
    <property type="entry name" value="TruD_insert_sf"/>
</dbReference>
<dbReference type="InterPro" id="IPR050170">
    <property type="entry name" value="TruD_pseudoU_synthase"/>
</dbReference>
<dbReference type="NCBIfam" id="NF002155">
    <property type="entry name" value="PRK00984.1-4"/>
    <property type="match status" value="1"/>
</dbReference>
<dbReference type="NCBIfam" id="TIGR00094">
    <property type="entry name" value="tRNA_TruD_broad"/>
    <property type="match status" value="1"/>
</dbReference>
<dbReference type="PANTHER" id="PTHR47811">
    <property type="entry name" value="TRNA PSEUDOURIDINE SYNTHASE D"/>
    <property type="match status" value="1"/>
</dbReference>
<dbReference type="PANTHER" id="PTHR47811:SF1">
    <property type="entry name" value="TRNA PSEUDOURIDINE SYNTHASE D"/>
    <property type="match status" value="1"/>
</dbReference>
<dbReference type="Pfam" id="PF01142">
    <property type="entry name" value="TruD"/>
    <property type="match status" value="2"/>
</dbReference>
<dbReference type="SUPFAM" id="SSF55120">
    <property type="entry name" value="Pseudouridine synthase"/>
    <property type="match status" value="1"/>
</dbReference>
<dbReference type="PROSITE" id="PS50984">
    <property type="entry name" value="TRUD"/>
    <property type="match status" value="1"/>
</dbReference>
<dbReference type="PROSITE" id="PS01268">
    <property type="entry name" value="UPF0024"/>
    <property type="match status" value="1"/>
</dbReference>